<dbReference type="EC" id="4.1.1.23" evidence="1"/>
<dbReference type="EMBL" id="CP001050">
    <property type="protein sequence ID" value="ACF29254.1"/>
    <property type="molecule type" value="Genomic_DNA"/>
</dbReference>
<dbReference type="RefSeq" id="WP_003687835.1">
    <property type="nucleotide sequence ID" value="NC_011035.1"/>
</dbReference>
<dbReference type="SMR" id="B4RKA3"/>
<dbReference type="GeneID" id="66752739"/>
<dbReference type="KEGG" id="ngk:NGK_0563"/>
<dbReference type="HOGENOM" id="CLU_067069_0_0_4"/>
<dbReference type="UniPathway" id="UPA00070">
    <property type="reaction ID" value="UER00120"/>
</dbReference>
<dbReference type="Proteomes" id="UP000002564">
    <property type="component" value="Chromosome"/>
</dbReference>
<dbReference type="GO" id="GO:0005829">
    <property type="term" value="C:cytosol"/>
    <property type="evidence" value="ECO:0007669"/>
    <property type="project" value="TreeGrafter"/>
</dbReference>
<dbReference type="GO" id="GO:0004590">
    <property type="term" value="F:orotidine-5'-phosphate decarboxylase activity"/>
    <property type="evidence" value="ECO:0007669"/>
    <property type="project" value="UniProtKB-UniRule"/>
</dbReference>
<dbReference type="GO" id="GO:0006207">
    <property type="term" value="P:'de novo' pyrimidine nucleobase biosynthetic process"/>
    <property type="evidence" value="ECO:0007669"/>
    <property type="project" value="InterPro"/>
</dbReference>
<dbReference type="GO" id="GO:0044205">
    <property type="term" value="P:'de novo' UMP biosynthetic process"/>
    <property type="evidence" value="ECO:0007669"/>
    <property type="project" value="UniProtKB-UniRule"/>
</dbReference>
<dbReference type="CDD" id="cd04725">
    <property type="entry name" value="OMP_decarboxylase_like"/>
    <property type="match status" value="1"/>
</dbReference>
<dbReference type="FunFam" id="3.20.20.70:FF:000015">
    <property type="entry name" value="Orotidine 5'-phosphate decarboxylase"/>
    <property type="match status" value="1"/>
</dbReference>
<dbReference type="Gene3D" id="3.20.20.70">
    <property type="entry name" value="Aldolase class I"/>
    <property type="match status" value="1"/>
</dbReference>
<dbReference type="HAMAP" id="MF_01200_B">
    <property type="entry name" value="OMPdecase_type1_B"/>
    <property type="match status" value="1"/>
</dbReference>
<dbReference type="InterPro" id="IPR013785">
    <property type="entry name" value="Aldolase_TIM"/>
</dbReference>
<dbReference type="InterPro" id="IPR014732">
    <property type="entry name" value="OMPdecase"/>
</dbReference>
<dbReference type="InterPro" id="IPR018089">
    <property type="entry name" value="OMPdecase_AS"/>
</dbReference>
<dbReference type="InterPro" id="IPR047596">
    <property type="entry name" value="OMPdecase_bac"/>
</dbReference>
<dbReference type="InterPro" id="IPR001754">
    <property type="entry name" value="OMPdeCOase_dom"/>
</dbReference>
<dbReference type="InterPro" id="IPR011060">
    <property type="entry name" value="RibuloseP-bd_barrel"/>
</dbReference>
<dbReference type="NCBIfam" id="NF001273">
    <property type="entry name" value="PRK00230.1"/>
    <property type="match status" value="1"/>
</dbReference>
<dbReference type="NCBIfam" id="TIGR01740">
    <property type="entry name" value="pyrF"/>
    <property type="match status" value="1"/>
</dbReference>
<dbReference type="PANTHER" id="PTHR32119">
    <property type="entry name" value="OROTIDINE 5'-PHOSPHATE DECARBOXYLASE"/>
    <property type="match status" value="1"/>
</dbReference>
<dbReference type="PANTHER" id="PTHR32119:SF2">
    <property type="entry name" value="OROTIDINE 5'-PHOSPHATE DECARBOXYLASE"/>
    <property type="match status" value="1"/>
</dbReference>
<dbReference type="Pfam" id="PF00215">
    <property type="entry name" value="OMPdecase"/>
    <property type="match status" value="1"/>
</dbReference>
<dbReference type="SMART" id="SM00934">
    <property type="entry name" value="OMPdecase"/>
    <property type="match status" value="1"/>
</dbReference>
<dbReference type="SUPFAM" id="SSF51366">
    <property type="entry name" value="Ribulose-phoshate binding barrel"/>
    <property type="match status" value="1"/>
</dbReference>
<dbReference type="PROSITE" id="PS00156">
    <property type="entry name" value="OMPDECASE"/>
    <property type="match status" value="1"/>
</dbReference>
<organism>
    <name type="scientific">Neisseria gonorrhoeae (strain NCCP11945)</name>
    <dbReference type="NCBI Taxonomy" id="521006"/>
    <lineage>
        <taxon>Bacteria</taxon>
        <taxon>Pseudomonadati</taxon>
        <taxon>Pseudomonadota</taxon>
        <taxon>Betaproteobacteria</taxon>
        <taxon>Neisseriales</taxon>
        <taxon>Neisseriaceae</taxon>
        <taxon>Neisseria</taxon>
    </lineage>
</organism>
<comment type="function">
    <text evidence="1">Catalyzes the decarboxylation of orotidine 5'-monophosphate (OMP) to uridine 5'-monophosphate (UMP).</text>
</comment>
<comment type="catalytic activity">
    <reaction evidence="1">
        <text>orotidine 5'-phosphate + H(+) = UMP + CO2</text>
        <dbReference type="Rhea" id="RHEA:11596"/>
        <dbReference type="ChEBI" id="CHEBI:15378"/>
        <dbReference type="ChEBI" id="CHEBI:16526"/>
        <dbReference type="ChEBI" id="CHEBI:57538"/>
        <dbReference type="ChEBI" id="CHEBI:57865"/>
        <dbReference type="EC" id="4.1.1.23"/>
    </reaction>
</comment>
<comment type="pathway">
    <text evidence="1">Pyrimidine metabolism; UMP biosynthesis via de novo pathway; UMP from orotate: step 2/2.</text>
</comment>
<comment type="subunit">
    <text evidence="1">Homodimer.</text>
</comment>
<comment type="similarity">
    <text evidence="1">Belongs to the OMP decarboxylase family. Type 1 subfamily.</text>
</comment>
<name>PYRF_NEIG2</name>
<keyword id="KW-0210">Decarboxylase</keyword>
<keyword id="KW-0456">Lyase</keyword>
<keyword id="KW-0665">Pyrimidine biosynthesis</keyword>
<accession>B4RKA3</accession>
<reference key="1">
    <citation type="journal article" date="2008" name="J. Bacteriol.">
        <title>Complete genome sequence of Neisseria gonorrhoeae NCCP11945.</title>
        <authorList>
            <person name="Chung G.T."/>
            <person name="Yoo J.S."/>
            <person name="Oh H.B."/>
            <person name="Lee Y.S."/>
            <person name="Cha S.H."/>
            <person name="Kim S.J."/>
            <person name="Yoo C.K."/>
        </authorList>
    </citation>
    <scope>NUCLEOTIDE SEQUENCE [LARGE SCALE GENOMIC DNA]</scope>
    <source>
        <strain>NCCP11945</strain>
    </source>
</reference>
<gene>
    <name evidence="1" type="primary">pyrF</name>
    <name type="ordered locus">NGK_0563</name>
</gene>
<proteinExistence type="inferred from homology"/>
<feature type="chain" id="PRO_1000138544" description="Orotidine 5'-phosphate decarboxylase">
    <location>
        <begin position="1"/>
        <end position="246"/>
    </location>
</feature>
<feature type="active site" description="Proton donor" evidence="1">
    <location>
        <position position="73"/>
    </location>
</feature>
<feature type="binding site" evidence="1">
    <location>
        <position position="22"/>
    </location>
    <ligand>
        <name>substrate</name>
    </ligand>
</feature>
<feature type="binding site" evidence="1">
    <location>
        <position position="44"/>
    </location>
    <ligand>
        <name>substrate</name>
    </ligand>
</feature>
<feature type="binding site" evidence="1">
    <location>
        <begin position="71"/>
        <end position="80"/>
    </location>
    <ligand>
        <name>substrate</name>
    </ligand>
</feature>
<feature type="binding site" evidence="1">
    <location>
        <position position="130"/>
    </location>
    <ligand>
        <name>substrate</name>
    </ligand>
</feature>
<feature type="binding site" evidence="1">
    <location>
        <position position="191"/>
    </location>
    <ligand>
        <name>substrate</name>
    </ligand>
</feature>
<feature type="binding site" evidence="1">
    <location>
        <position position="201"/>
    </location>
    <ligand>
        <name>substrate</name>
    </ligand>
</feature>
<feature type="binding site" evidence="1">
    <location>
        <position position="221"/>
    </location>
    <ligand>
        <name>substrate</name>
    </ligand>
</feature>
<feature type="binding site" evidence="1">
    <location>
        <position position="222"/>
    </location>
    <ligand>
        <name>substrate</name>
    </ligand>
</feature>
<protein>
    <recommendedName>
        <fullName evidence="1">Orotidine 5'-phosphate decarboxylase</fullName>
        <ecNumber evidence="1">4.1.1.23</ecNumber>
    </recommendedName>
    <alternativeName>
        <fullName evidence="1">OMP decarboxylase</fullName>
        <shortName evidence="1">OMPDCase</shortName>
        <shortName evidence="1">OMPdecase</shortName>
    </alternativeName>
</protein>
<sequence length="246" mass="26506">MNPLITDFQTPQQRTPVIVALDFANEKDTLGFVRNLDPALCQIKIGKELFTATGRSLAESLIHQGFKLFLDLKYHDIPHTVAQACKVAADMGVWMVDMHASGGRRMMEAAAEAVAGYGTKPLLIGVTVLTSMEQSDLAEIGLNTAPEEQVIRLAKLAQSSGLDGVVCSAQEAAPLRRELGRDFVLVTPGIRLDVAGNNDDQRRIMTPAEALAAGSTYLVMGRPVTRAADPVAVLREVNRVANLEAN</sequence>
<evidence type="ECO:0000255" key="1">
    <source>
        <dbReference type="HAMAP-Rule" id="MF_01200"/>
    </source>
</evidence>